<organism>
    <name type="scientific">Kineococcus radiotolerans (strain ATCC BAA-149 / DSM 14245 / SRS30216)</name>
    <dbReference type="NCBI Taxonomy" id="266940"/>
    <lineage>
        <taxon>Bacteria</taxon>
        <taxon>Bacillati</taxon>
        <taxon>Actinomycetota</taxon>
        <taxon>Actinomycetes</taxon>
        <taxon>Kineosporiales</taxon>
        <taxon>Kineosporiaceae</taxon>
        <taxon>Kineococcus</taxon>
    </lineage>
</organism>
<comment type="function">
    <text evidence="1">DNA ligase that seals nicks in double-stranded DNA during DNA replication, DNA recombination and DNA repair.</text>
</comment>
<comment type="catalytic activity">
    <reaction evidence="1">
        <text>ATP + (deoxyribonucleotide)n-3'-hydroxyl + 5'-phospho-(deoxyribonucleotide)m = (deoxyribonucleotide)n+m + AMP + diphosphate.</text>
        <dbReference type="EC" id="6.5.1.1"/>
    </reaction>
</comment>
<comment type="cofactor">
    <cofactor evidence="1">
        <name>Mg(2+)</name>
        <dbReference type="ChEBI" id="CHEBI:18420"/>
    </cofactor>
</comment>
<comment type="similarity">
    <text evidence="1">Belongs to the ATP-dependent DNA ligase family.</text>
</comment>
<feature type="chain" id="PRO_0000365220" description="Probable DNA ligase">
    <location>
        <begin position="1"/>
        <end position="503"/>
    </location>
</feature>
<feature type="active site" description="N6-AMP-lysine intermediate" evidence="1">
    <location>
        <position position="214"/>
    </location>
</feature>
<feature type="binding site" evidence="1">
    <location>
        <position position="212"/>
    </location>
    <ligand>
        <name>ATP</name>
        <dbReference type="ChEBI" id="CHEBI:30616"/>
    </ligand>
</feature>
<feature type="binding site" evidence="1">
    <location>
        <position position="219"/>
    </location>
    <ligand>
        <name>ATP</name>
        <dbReference type="ChEBI" id="CHEBI:30616"/>
    </ligand>
</feature>
<feature type="binding site" evidence="1">
    <location>
        <position position="234"/>
    </location>
    <ligand>
        <name>ATP</name>
        <dbReference type="ChEBI" id="CHEBI:30616"/>
    </ligand>
</feature>
<feature type="binding site" evidence="1">
    <location>
        <position position="263"/>
    </location>
    <ligand>
        <name>ATP</name>
        <dbReference type="ChEBI" id="CHEBI:30616"/>
    </ligand>
</feature>
<feature type="binding site" evidence="1">
    <location>
        <position position="296"/>
    </location>
    <ligand>
        <name>ATP</name>
        <dbReference type="ChEBI" id="CHEBI:30616"/>
    </ligand>
</feature>
<feature type="binding site" evidence="1">
    <location>
        <position position="368"/>
    </location>
    <ligand>
        <name>ATP</name>
        <dbReference type="ChEBI" id="CHEBI:30616"/>
    </ligand>
</feature>
<feature type="binding site" evidence="1">
    <location>
        <position position="374"/>
    </location>
    <ligand>
        <name>ATP</name>
        <dbReference type="ChEBI" id="CHEBI:30616"/>
    </ligand>
</feature>
<sequence>MLLADVVATSTAVAATRSRTAKVAAIAGLLRGLDPADAELTAVVAAYLGGSLRQRRTGLGGRSLSGLPAPAGEASLEVAEVDRRFEEVAALSGPGSAGRRAAAVADLFARATGEEQRWLRGVVAGELRQGALDALVQDAAAAVAGVPGPDVRRAAMLAGSTVQAVVAALRGGAAELAGFGLHVGRPLLPMLAASTTSVAEAVAGFAGPVAVDTKLDGIRIQVHRGPEGVRIATRTLEDITARLPEVVEVVRELPARAFVLDGEALVLDGSGRPKAFQDTASRTAQASGDAVVPYFFDVLHLDGADLLDVALRERLAALDGFVPPRWRTPRLVTADPAAAAEFAAQALAGGHEGVVVKDLDSPYAAGRRGGAWVKVKPVHTLDLVVLAVERGSGRRAGWLSNVHLGARDPATGGFVMLGKTFKGMTDETLAWQTARFRELQTGEDGYVVTVRPEQVVEVAFDGLQRSTRYPGGVALRFARVVRYREDKTAAEADTLETVLALAR</sequence>
<evidence type="ECO:0000255" key="1">
    <source>
        <dbReference type="HAMAP-Rule" id="MF_00407"/>
    </source>
</evidence>
<gene>
    <name evidence="1" type="primary">lig</name>
    <name type="ordered locus">Krad_4316</name>
</gene>
<reference key="1">
    <citation type="journal article" date="2008" name="PLoS ONE">
        <title>Survival in nuclear waste, extreme resistance, and potential applications gleaned from the genome sequence of Kineococcus radiotolerans SRS30216.</title>
        <authorList>
            <person name="Bagwell C.E."/>
            <person name="Bhat S."/>
            <person name="Hawkins G.M."/>
            <person name="Smith B.W."/>
            <person name="Biswas T."/>
            <person name="Hoover T.R."/>
            <person name="Saunders E."/>
            <person name="Han C.S."/>
            <person name="Tsodikov O.V."/>
            <person name="Shimkets L.J."/>
        </authorList>
    </citation>
    <scope>NUCLEOTIDE SEQUENCE [LARGE SCALE GENOMIC DNA]</scope>
    <source>
        <strain>ATCC BAA-149 / DSM 14245 / SRS30216</strain>
    </source>
</reference>
<accession>A6WG40</accession>
<keyword id="KW-0067">ATP-binding</keyword>
<keyword id="KW-0131">Cell cycle</keyword>
<keyword id="KW-0132">Cell division</keyword>
<keyword id="KW-0227">DNA damage</keyword>
<keyword id="KW-0233">DNA recombination</keyword>
<keyword id="KW-0234">DNA repair</keyword>
<keyword id="KW-0235">DNA replication</keyword>
<keyword id="KW-0436">Ligase</keyword>
<keyword id="KW-0460">Magnesium</keyword>
<keyword id="KW-0479">Metal-binding</keyword>
<keyword id="KW-0547">Nucleotide-binding</keyword>
<keyword id="KW-1185">Reference proteome</keyword>
<proteinExistence type="inferred from homology"/>
<name>DNLI_KINRD</name>
<protein>
    <recommendedName>
        <fullName evidence="1">Probable DNA ligase</fullName>
        <ecNumber evidence="1">6.5.1.1</ecNumber>
    </recommendedName>
    <alternativeName>
        <fullName evidence="1">Polydeoxyribonucleotide synthase [ATP]</fullName>
    </alternativeName>
</protein>
<dbReference type="EC" id="6.5.1.1" evidence="1"/>
<dbReference type="EMBL" id="CP000750">
    <property type="protein sequence ID" value="ABS05779.1"/>
    <property type="molecule type" value="Genomic_DNA"/>
</dbReference>
<dbReference type="RefSeq" id="WP_012085921.1">
    <property type="nucleotide sequence ID" value="NC_009664.2"/>
</dbReference>
<dbReference type="SMR" id="A6WG40"/>
<dbReference type="STRING" id="266940.Krad_4316"/>
<dbReference type="KEGG" id="kra:Krad_4316"/>
<dbReference type="eggNOG" id="COG1793">
    <property type="taxonomic scope" value="Bacteria"/>
</dbReference>
<dbReference type="HOGENOM" id="CLU_005138_6_1_11"/>
<dbReference type="OrthoDB" id="3733803at2"/>
<dbReference type="Proteomes" id="UP000001116">
    <property type="component" value="Chromosome"/>
</dbReference>
<dbReference type="GO" id="GO:0005524">
    <property type="term" value="F:ATP binding"/>
    <property type="evidence" value="ECO:0007669"/>
    <property type="project" value="UniProtKB-UniRule"/>
</dbReference>
<dbReference type="GO" id="GO:0003677">
    <property type="term" value="F:DNA binding"/>
    <property type="evidence" value="ECO:0007669"/>
    <property type="project" value="InterPro"/>
</dbReference>
<dbReference type="GO" id="GO:0003910">
    <property type="term" value="F:DNA ligase (ATP) activity"/>
    <property type="evidence" value="ECO:0007669"/>
    <property type="project" value="UniProtKB-UniRule"/>
</dbReference>
<dbReference type="GO" id="GO:0046872">
    <property type="term" value="F:metal ion binding"/>
    <property type="evidence" value="ECO:0007669"/>
    <property type="project" value="UniProtKB-KW"/>
</dbReference>
<dbReference type="GO" id="GO:0051301">
    <property type="term" value="P:cell division"/>
    <property type="evidence" value="ECO:0007669"/>
    <property type="project" value="UniProtKB-KW"/>
</dbReference>
<dbReference type="GO" id="GO:0006310">
    <property type="term" value="P:DNA recombination"/>
    <property type="evidence" value="ECO:0007669"/>
    <property type="project" value="UniProtKB-UniRule"/>
</dbReference>
<dbReference type="GO" id="GO:0006281">
    <property type="term" value="P:DNA repair"/>
    <property type="evidence" value="ECO:0007669"/>
    <property type="project" value="UniProtKB-UniRule"/>
</dbReference>
<dbReference type="GO" id="GO:0006260">
    <property type="term" value="P:DNA replication"/>
    <property type="evidence" value="ECO:0007669"/>
    <property type="project" value="UniProtKB-UniRule"/>
</dbReference>
<dbReference type="CDD" id="cd07901">
    <property type="entry name" value="Adenylation_DNA_ligase_Arch_LigB"/>
    <property type="match status" value="1"/>
</dbReference>
<dbReference type="CDD" id="cd07972">
    <property type="entry name" value="OBF_DNA_ligase_Arch_LigB"/>
    <property type="match status" value="1"/>
</dbReference>
<dbReference type="FunFam" id="2.40.50.140:FF:000163">
    <property type="entry name" value="Probable DNA ligase"/>
    <property type="match status" value="1"/>
</dbReference>
<dbReference type="Gene3D" id="1.10.3260.10">
    <property type="entry name" value="DNA ligase, ATP-dependent, N-terminal domain"/>
    <property type="match status" value="1"/>
</dbReference>
<dbReference type="Gene3D" id="3.30.470.30">
    <property type="entry name" value="DNA ligase/mRNA capping enzyme"/>
    <property type="match status" value="1"/>
</dbReference>
<dbReference type="Gene3D" id="2.40.50.140">
    <property type="entry name" value="Nucleic acid-binding proteins"/>
    <property type="match status" value="1"/>
</dbReference>
<dbReference type="HAMAP" id="MF_00407">
    <property type="entry name" value="DNA_ligase"/>
    <property type="match status" value="1"/>
</dbReference>
<dbReference type="InterPro" id="IPR050191">
    <property type="entry name" value="ATP-dep_DNA_ligase"/>
</dbReference>
<dbReference type="InterPro" id="IPR022865">
    <property type="entry name" value="DNA_ligae_ATP-dep_bac/arc"/>
</dbReference>
<dbReference type="InterPro" id="IPR012309">
    <property type="entry name" value="DNA_ligase_ATP-dep_C"/>
</dbReference>
<dbReference type="InterPro" id="IPR012310">
    <property type="entry name" value="DNA_ligase_ATP-dep_cent"/>
</dbReference>
<dbReference type="InterPro" id="IPR016059">
    <property type="entry name" value="DNA_ligase_ATP-dep_CS"/>
</dbReference>
<dbReference type="InterPro" id="IPR012308">
    <property type="entry name" value="DNA_ligase_ATP-dep_N"/>
</dbReference>
<dbReference type="InterPro" id="IPR036599">
    <property type="entry name" value="DNA_ligase_N_sf"/>
</dbReference>
<dbReference type="InterPro" id="IPR012340">
    <property type="entry name" value="NA-bd_OB-fold"/>
</dbReference>
<dbReference type="NCBIfam" id="NF002868">
    <property type="entry name" value="PRK03180.1"/>
    <property type="match status" value="1"/>
</dbReference>
<dbReference type="PANTHER" id="PTHR45674">
    <property type="entry name" value="DNA LIGASE 1/3 FAMILY MEMBER"/>
    <property type="match status" value="1"/>
</dbReference>
<dbReference type="PANTHER" id="PTHR45674:SF13">
    <property type="entry name" value="DNA LIGASE-RELATED"/>
    <property type="match status" value="1"/>
</dbReference>
<dbReference type="Pfam" id="PF04679">
    <property type="entry name" value="DNA_ligase_A_C"/>
    <property type="match status" value="1"/>
</dbReference>
<dbReference type="Pfam" id="PF01068">
    <property type="entry name" value="DNA_ligase_A_M"/>
    <property type="match status" value="1"/>
</dbReference>
<dbReference type="Pfam" id="PF04675">
    <property type="entry name" value="DNA_ligase_A_N"/>
    <property type="match status" value="1"/>
</dbReference>
<dbReference type="SUPFAM" id="SSF117018">
    <property type="entry name" value="ATP-dependent DNA ligase DNA-binding domain"/>
    <property type="match status" value="1"/>
</dbReference>
<dbReference type="SUPFAM" id="SSF56091">
    <property type="entry name" value="DNA ligase/mRNA capping enzyme, catalytic domain"/>
    <property type="match status" value="1"/>
</dbReference>
<dbReference type="SUPFAM" id="SSF50249">
    <property type="entry name" value="Nucleic acid-binding proteins"/>
    <property type="match status" value="1"/>
</dbReference>
<dbReference type="PROSITE" id="PS00697">
    <property type="entry name" value="DNA_LIGASE_A1"/>
    <property type="match status" value="1"/>
</dbReference>
<dbReference type="PROSITE" id="PS50160">
    <property type="entry name" value="DNA_LIGASE_A3"/>
    <property type="match status" value="1"/>
</dbReference>